<comment type="function">
    <text evidence="1">Methyltransferase involved in ribosomal biogenesis. Specifically catalyzes the N1-methylation of the pseudouridine corresponding to position 914 in M.jannaschii 16S rRNA.</text>
</comment>
<comment type="catalytic activity">
    <reaction evidence="1">
        <text>a pseudouridine in rRNA + S-adenosyl-L-methionine = an N(1)-methylpseudouridine in rRNA + S-adenosyl-L-homocysteine + H(+)</text>
        <dbReference type="Rhea" id="RHEA:46696"/>
        <dbReference type="Rhea" id="RHEA-COMP:11634"/>
        <dbReference type="Rhea" id="RHEA-COMP:13933"/>
        <dbReference type="ChEBI" id="CHEBI:15378"/>
        <dbReference type="ChEBI" id="CHEBI:57856"/>
        <dbReference type="ChEBI" id="CHEBI:59789"/>
        <dbReference type="ChEBI" id="CHEBI:65314"/>
        <dbReference type="ChEBI" id="CHEBI:74890"/>
    </reaction>
</comment>
<comment type="subunit">
    <text evidence="1">Homodimer.</text>
</comment>
<comment type="similarity">
    <text evidence="2">Belongs to the class IV-like SAM-binding methyltransferase superfamily. RNA methyltransferase NEP1 family.</text>
</comment>
<dbReference type="EC" id="2.1.1.-" evidence="1"/>
<dbReference type="EMBL" id="CP000561">
    <property type="protein sequence ID" value="ABO09008.1"/>
    <property type="molecule type" value="Genomic_DNA"/>
</dbReference>
<dbReference type="RefSeq" id="WP_011850266.1">
    <property type="nucleotide sequence ID" value="NC_009073.1"/>
</dbReference>
<dbReference type="SMR" id="A3MWJ1"/>
<dbReference type="STRING" id="410359.Pcal_1590"/>
<dbReference type="GeneID" id="4908357"/>
<dbReference type="KEGG" id="pcl:Pcal_1590"/>
<dbReference type="eggNOG" id="arCOG04122">
    <property type="taxonomic scope" value="Archaea"/>
</dbReference>
<dbReference type="HOGENOM" id="CLU_055846_1_3_2"/>
<dbReference type="OrthoDB" id="7612at2157"/>
<dbReference type="Proteomes" id="UP000001431">
    <property type="component" value="Chromosome"/>
</dbReference>
<dbReference type="GO" id="GO:0070037">
    <property type="term" value="F:rRNA (pseudouridine) methyltransferase activity"/>
    <property type="evidence" value="ECO:0007669"/>
    <property type="project" value="UniProtKB-UniRule"/>
</dbReference>
<dbReference type="GO" id="GO:0019843">
    <property type="term" value="F:rRNA binding"/>
    <property type="evidence" value="ECO:0007669"/>
    <property type="project" value="UniProtKB-UniRule"/>
</dbReference>
<dbReference type="GO" id="GO:0070475">
    <property type="term" value="P:rRNA base methylation"/>
    <property type="evidence" value="ECO:0007669"/>
    <property type="project" value="InterPro"/>
</dbReference>
<dbReference type="CDD" id="cd18088">
    <property type="entry name" value="Nep1-like"/>
    <property type="match status" value="1"/>
</dbReference>
<dbReference type="FunFam" id="3.40.1280.10:FF:000042">
    <property type="entry name" value="Ribosomal RNA small subunit methyltransferase Nep1"/>
    <property type="match status" value="1"/>
</dbReference>
<dbReference type="Gene3D" id="3.40.1280.10">
    <property type="match status" value="1"/>
</dbReference>
<dbReference type="HAMAP" id="MF_00554">
    <property type="entry name" value="NEP1"/>
    <property type="match status" value="1"/>
</dbReference>
<dbReference type="InterPro" id="IPR029028">
    <property type="entry name" value="Alpha/beta_knot_MTases"/>
</dbReference>
<dbReference type="InterPro" id="IPR005304">
    <property type="entry name" value="Rbsml_bgen_MeTrfase_EMG1/NEP1"/>
</dbReference>
<dbReference type="InterPro" id="IPR023503">
    <property type="entry name" value="Ribosome_NEP1_arc"/>
</dbReference>
<dbReference type="InterPro" id="IPR029026">
    <property type="entry name" value="tRNA_m1G_MTases_N"/>
</dbReference>
<dbReference type="PANTHER" id="PTHR12636">
    <property type="entry name" value="NEP1/MRA1"/>
    <property type="match status" value="1"/>
</dbReference>
<dbReference type="PANTHER" id="PTHR12636:SF5">
    <property type="entry name" value="RIBOSOMAL RNA SMALL SUBUNIT METHYLTRANSFERASE NEP1"/>
    <property type="match status" value="1"/>
</dbReference>
<dbReference type="Pfam" id="PF03587">
    <property type="entry name" value="EMG1"/>
    <property type="match status" value="1"/>
</dbReference>
<dbReference type="SUPFAM" id="SSF75217">
    <property type="entry name" value="alpha/beta knot"/>
    <property type="match status" value="1"/>
</dbReference>
<accession>A3MWJ1</accession>
<reference key="1">
    <citation type="submission" date="2007-02" db="EMBL/GenBank/DDBJ databases">
        <title>Complete sequence of Pyrobaculum calidifontis JCM 11548.</title>
        <authorList>
            <consortium name="US DOE Joint Genome Institute"/>
            <person name="Copeland A."/>
            <person name="Lucas S."/>
            <person name="Lapidus A."/>
            <person name="Barry K."/>
            <person name="Glavina del Rio T."/>
            <person name="Dalin E."/>
            <person name="Tice H."/>
            <person name="Pitluck S."/>
            <person name="Chain P."/>
            <person name="Malfatti S."/>
            <person name="Shin M."/>
            <person name="Vergez L."/>
            <person name="Schmutz J."/>
            <person name="Larimer F."/>
            <person name="Land M."/>
            <person name="Hauser L."/>
            <person name="Kyrpides N."/>
            <person name="Mikhailova N."/>
            <person name="Cozen A.E."/>
            <person name="Fitz-Gibbon S.T."/>
            <person name="House C.H."/>
            <person name="Saltikov C."/>
            <person name="Lowe T.M."/>
            <person name="Richardson P."/>
        </authorList>
    </citation>
    <scope>NUCLEOTIDE SEQUENCE [LARGE SCALE GENOMIC DNA]</scope>
    <source>
        <strain>DSM 21063 / JCM 11548 / VA1</strain>
    </source>
</reference>
<protein>
    <recommendedName>
        <fullName evidence="1">Ribosomal RNA small subunit methyltransferase Nep1</fullName>
        <ecNumber evidence="1">2.1.1.-</ecNumber>
    </recommendedName>
    <alternativeName>
        <fullName evidence="1">16S rRNA (pseudouridine-N1-)-methyltransferase Nep1</fullName>
    </alternativeName>
</protein>
<sequence length="221" mass="24080">MILVLAEAALELVPESLWRHPAIVADARRRGKKPGEILLDRARHHVAMAKLDKAERRGRPDIVHQVLLAFQYSLLNRAGRGRAFVHTVGDYIISVKPETRVPKNYNNFVSLMEQLFKVGRVPPEGEALMEARRGSLAALLEELGGKWVALHEQGRAVSFAELGRAVADAVVVVGGFPHGDFENKWILEGAEAVYKIGNVSLDAAQAVCRAVAAAEAALGLI</sequence>
<proteinExistence type="inferred from homology"/>
<keyword id="KW-0489">Methyltransferase</keyword>
<keyword id="KW-0690">Ribosome biogenesis</keyword>
<keyword id="KW-0694">RNA-binding</keyword>
<keyword id="KW-0698">rRNA processing</keyword>
<keyword id="KW-0699">rRNA-binding</keyword>
<keyword id="KW-0949">S-adenosyl-L-methionine</keyword>
<keyword id="KW-0808">Transferase</keyword>
<name>NEP1_PYRCJ</name>
<evidence type="ECO:0000255" key="1">
    <source>
        <dbReference type="HAMAP-Rule" id="MF_00554"/>
    </source>
</evidence>
<evidence type="ECO:0000305" key="2"/>
<organism>
    <name type="scientific">Pyrobaculum calidifontis (strain DSM 21063 / JCM 11548 / VA1)</name>
    <dbReference type="NCBI Taxonomy" id="410359"/>
    <lineage>
        <taxon>Archaea</taxon>
        <taxon>Thermoproteota</taxon>
        <taxon>Thermoprotei</taxon>
        <taxon>Thermoproteales</taxon>
        <taxon>Thermoproteaceae</taxon>
        <taxon>Pyrobaculum</taxon>
    </lineage>
</organism>
<feature type="chain" id="PRO_1000017929" description="Ribosomal RNA small subunit methyltransferase Nep1">
    <location>
        <begin position="1"/>
        <end position="221"/>
    </location>
</feature>
<feature type="binding site" evidence="1">
    <location>
        <position position="174"/>
    </location>
    <ligand>
        <name>S-adenosyl-L-methionine</name>
        <dbReference type="ChEBI" id="CHEBI:59789"/>
    </ligand>
</feature>
<feature type="binding site" evidence="1">
    <location>
        <position position="179"/>
    </location>
    <ligand>
        <name>S-adenosyl-L-methionine</name>
        <dbReference type="ChEBI" id="CHEBI:59789"/>
    </ligand>
</feature>
<feature type="binding site" evidence="1">
    <location>
        <begin position="196"/>
        <end position="201"/>
    </location>
    <ligand>
        <name>S-adenosyl-L-methionine</name>
        <dbReference type="ChEBI" id="CHEBI:59789"/>
    </ligand>
</feature>
<feature type="site" description="Interaction with substrate rRNA" evidence="1">
    <location>
        <position position="59"/>
    </location>
</feature>
<feature type="site" description="Stabilizes Arg-59" evidence="1">
    <location>
        <position position="61"/>
    </location>
</feature>
<feature type="site" description="Interaction with substrate rRNA" evidence="1">
    <location>
        <position position="100"/>
    </location>
</feature>
<feature type="site" description="Interaction with substrate rRNA" evidence="1">
    <location>
        <position position="103"/>
    </location>
</feature>
<feature type="site" description="Interaction with substrate rRNA" evidence="1">
    <location>
        <position position="107"/>
    </location>
</feature>
<gene>
    <name evidence="1" type="primary">nep1</name>
    <name type="ordered locus">Pcal_1590</name>
</gene>